<evidence type="ECO:0000255" key="1"/>
<evidence type="ECO:0000255" key="2">
    <source>
        <dbReference type="PROSITE-ProRule" id="PRU00691"/>
    </source>
</evidence>
<evidence type="ECO:0000305" key="3"/>
<feature type="chain" id="PRO_0000208931" description="Methylamine utilization protein MauD">
    <location>
        <begin position="1"/>
        <end position="197"/>
    </location>
</feature>
<feature type="transmembrane region" description="Helical" evidence="1">
    <location>
        <begin position="3"/>
        <end position="23"/>
    </location>
</feature>
<feature type="domain" description="Thioredoxin" evidence="2">
    <location>
        <begin position="48"/>
        <end position="180"/>
    </location>
</feature>
<organism>
    <name type="scientific">Paracoccus versutus</name>
    <name type="common">Thiobacillus versutus</name>
    <dbReference type="NCBI Taxonomy" id="34007"/>
    <lineage>
        <taxon>Bacteria</taxon>
        <taxon>Pseudomonadati</taxon>
        <taxon>Pseudomonadota</taxon>
        <taxon>Alphaproteobacteria</taxon>
        <taxon>Rhodobacterales</taxon>
        <taxon>Paracoccaceae</taxon>
        <taxon>Paracoccus</taxon>
    </lineage>
</organism>
<keyword id="KW-0472">Membrane</keyword>
<keyword id="KW-0812">Transmembrane</keyword>
<keyword id="KW-1133">Transmembrane helix</keyword>
<comment type="function">
    <text>May be specifically involved in the processing, transport, and/or maturation of the MADH beta-subunit.</text>
</comment>
<comment type="pathway">
    <text>One-carbon metabolism; methylamine degradation.</text>
</comment>
<comment type="subcellular location">
    <subcellularLocation>
        <location evidence="3">Membrane</location>
        <topology evidence="3">Single-pass membrane protein</topology>
    </subcellularLocation>
</comment>
<proteinExistence type="evidence at transcript level"/>
<name>MAUD_PARVE</name>
<reference key="1">
    <citation type="submission" date="1996-01" db="EMBL/GenBank/DDBJ databases">
        <authorList>
            <person name="Huitema F."/>
            <person name="Duine J.A."/>
            <person name="Canters G.W."/>
        </authorList>
    </citation>
    <scope>NUCLEOTIDE SEQUENCE [GENOMIC DNA]</scope>
</reference>
<reference key="2">
    <citation type="journal article" date="1991" name="Eur. J. Biochem.">
        <title>Cloning, sequencing and expression studies of the genes encoding amicyanin and the beta-subunit of methylamine dehydrogenase from Thiobacillus versutus.</title>
        <authorList>
            <person name="Ubbink M."/>
            <person name="van Kleef M.A."/>
            <person name="Kleinjan D.J."/>
            <person name="Hoitink C.W."/>
            <person name="Huitema F."/>
            <person name="Beintema J.J."/>
            <person name="Duine J.A."/>
            <person name="Canters G.W."/>
        </authorList>
    </citation>
    <scope>NUCLEOTIDE SEQUENCE [GENOMIC DNA] OF 157-197</scope>
</reference>
<accession>Q56461</accession>
<accession>Q56457</accession>
<dbReference type="EMBL" id="L36951">
    <property type="protein sequence ID" value="AAA85384.1"/>
    <property type="molecule type" value="mRNA"/>
</dbReference>
<dbReference type="EMBL" id="M58001">
    <property type="protein sequence ID" value="AAA50569.1"/>
    <property type="molecule type" value="Genomic_DNA"/>
</dbReference>
<dbReference type="PIR" id="S19730">
    <property type="entry name" value="S19730"/>
</dbReference>
<dbReference type="RefSeq" id="WP_036750429.1">
    <property type="nucleotide sequence ID" value="NZ_CP035286.1"/>
</dbReference>
<dbReference type="SMR" id="Q56461"/>
<dbReference type="eggNOG" id="COG1225">
    <property type="taxonomic scope" value="Bacteria"/>
</dbReference>
<dbReference type="OrthoDB" id="462848at2"/>
<dbReference type="UniPathway" id="UPA00895"/>
<dbReference type="GO" id="GO:0016020">
    <property type="term" value="C:membrane"/>
    <property type="evidence" value="ECO:0007669"/>
    <property type="project" value="UniProtKB-SubCell"/>
</dbReference>
<dbReference type="GO" id="GO:0016209">
    <property type="term" value="F:antioxidant activity"/>
    <property type="evidence" value="ECO:0007669"/>
    <property type="project" value="InterPro"/>
</dbReference>
<dbReference type="GO" id="GO:0016491">
    <property type="term" value="F:oxidoreductase activity"/>
    <property type="evidence" value="ECO:0007669"/>
    <property type="project" value="InterPro"/>
</dbReference>
<dbReference type="GO" id="GO:0030416">
    <property type="term" value="P:methylamine metabolic process"/>
    <property type="evidence" value="ECO:0007669"/>
    <property type="project" value="InterPro"/>
</dbReference>
<dbReference type="Gene3D" id="3.40.30.10">
    <property type="entry name" value="Glutaredoxin"/>
    <property type="match status" value="1"/>
</dbReference>
<dbReference type="InterPro" id="IPR000866">
    <property type="entry name" value="AhpC/TSA"/>
</dbReference>
<dbReference type="InterPro" id="IPR013478">
    <property type="entry name" value="MeN_DH_accessory"/>
</dbReference>
<dbReference type="InterPro" id="IPR036249">
    <property type="entry name" value="Thioredoxin-like_sf"/>
</dbReference>
<dbReference type="InterPro" id="IPR013766">
    <property type="entry name" value="Thioredoxin_domain"/>
</dbReference>
<dbReference type="InterPro" id="IPR050553">
    <property type="entry name" value="Thioredoxin_ResA/DsbE_sf"/>
</dbReference>
<dbReference type="NCBIfam" id="TIGR02661">
    <property type="entry name" value="MauD"/>
    <property type="match status" value="1"/>
</dbReference>
<dbReference type="PANTHER" id="PTHR42852">
    <property type="entry name" value="THIOL:DISULFIDE INTERCHANGE PROTEIN DSBE"/>
    <property type="match status" value="1"/>
</dbReference>
<dbReference type="PANTHER" id="PTHR42852:SF17">
    <property type="entry name" value="THIOREDOXIN-LIKE PROTEIN HI_1115"/>
    <property type="match status" value="1"/>
</dbReference>
<dbReference type="Pfam" id="PF00578">
    <property type="entry name" value="AhpC-TSA"/>
    <property type="match status" value="1"/>
</dbReference>
<dbReference type="SUPFAM" id="SSF52833">
    <property type="entry name" value="Thioredoxin-like"/>
    <property type="match status" value="1"/>
</dbReference>
<dbReference type="PROSITE" id="PS51352">
    <property type="entry name" value="THIOREDOXIN_2"/>
    <property type="match status" value="1"/>
</dbReference>
<sequence>MTFLIASNILLWIAFLGVTVVMLGLMRQVGLLHERSSPMGAMITDHGPDIGDMAPEFDLPDYFGRSVHIGGASERPTLLMFTAPTCPVCDKLFPIIKSIARAEKIGVVMISDGAPEEHARFLKNHELGQIRYVVSAEIGMAFQVGKIPYGVLVDGEGVIRAKGLTNTREHLESLLEADKTGFASLQQFMASRKKNAA</sequence>
<protein>
    <recommendedName>
        <fullName>Methylamine utilization protein MauD</fullName>
    </recommendedName>
</protein>
<gene>
    <name type="primary">mauD</name>
    <name type="synonym">madD</name>
</gene>